<keyword id="KW-0028">Amino-acid biosynthesis</keyword>
<keyword id="KW-0963">Cytoplasm</keyword>
<keyword id="KW-0413">Isomerase</keyword>
<keyword id="KW-0457">Lysine biosynthesis</keyword>
<evidence type="ECO:0000255" key="1">
    <source>
        <dbReference type="HAMAP-Rule" id="MF_00197"/>
    </source>
</evidence>
<accession>Q116P1</accession>
<dbReference type="EC" id="5.1.1.7" evidence="1"/>
<dbReference type="EMBL" id="CP000393">
    <property type="protein sequence ID" value="ABG50533.1"/>
    <property type="molecule type" value="Genomic_DNA"/>
</dbReference>
<dbReference type="RefSeq" id="WP_011610919.1">
    <property type="nucleotide sequence ID" value="NC_008312.1"/>
</dbReference>
<dbReference type="SMR" id="Q116P1"/>
<dbReference type="STRING" id="203124.Tery_1173"/>
<dbReference type="KEGG" id="ter:Tery_1173"/>
<dbReference type="eggNOG" id="COG0253">
    <property type="taxonomic scope" value="Bacteria"/>
</dbReference>
<dbReference type="HOGENOM" id="CLU_053306_2_1_3"/>
<dbReference type="OrthoDB" id="9805408at2"/>
<dbReference type="UniPathway" id="UPA00034">
    <property type="reaction ID" value="UER00025"/>
</dbReference>
<dbReference type="GO" id="GO:0005829">
    <property type="term" value="C:cytosol"/>
    <property type="evidence" value="ECO:0007669"/>
    <property type="project" value="TreeGrafter"/>
</dbReference>
<dbReference type="GO" id="GO:0008837">
    <property type="term" value="F:diaminopimelate epimerase activity"/>
    <property type="evidence" value="ECO:0007669"/>
    <property type="project" value="UniProtKB-UniRule"/>
</dbReference>
<dbReference type="GO" id="GO:0009089">
    <property type="term" value="P:lysine biosynthetic process via diaminopimelate"/>
    <property type="evidence" value="ECO:0007669"/>
    <property type="project" value="UniProtKB-UniRule"/>
</dbReference>
<dbReference type="FunFam" id="3.10.310.10:FF:000009">
    <property type="entry name" value="Diaminopimelate epimerase chloroplastic"/>
    <property type="match status" value="1"/>
</dbReference>
<dbReference type="FunFam" id="3.10.310.10:FF:000011">
    <property type="entry name" value="Diaminopimelate epimerase, chloroplastic"/>
    <property type="match status" value="1"/>
</dbReference>
<dbReference type="Gene3D" id="3.10.310.10">
    <property type="entry name" value="Diaminopimelate Epimerase, Chain A, domain 1"/>
    <property type="match status" value="2"/>
</dbReference>
<dbReference type="HAMAP" id="MF_00197">
    <property type="entry name" value="DAP_epimerase"/>
    <property type="match status" value="1"/>
</dbReference>
<dbReference type="InterPro" id="IPR018510">
    <property type="entry name" value="DAP_epimerase_AS"/>
</dbReference>
<dbReference type="InterPro" id="IPR001653">
    <property type="entry name" value="DAP_epimerase_DapF"/>
</dbReference>
<dbReference type="NCBIfam" id="TIGR00652">
    <property type="entry name" value="DapF"/>
    <property type="match status" value="1"/>
</dbReference>
<dbReference type="PANTHER" id="PTHR31689:SF0">
    <property type="entry name" value="DIAMINOPIMELATE EPIMERASE"/>
    <property type="match status" value="1"/>
</dbReference>
<dbReference type="PANTHER" id="PTHR31689">
    <property type="entry name" value="DIAMINOPIMELATE EPIMERASE, CHLOROPLASTIC"/>
    <property type="match status" value="1"/>
</dbReference>
<dbReference type="Pfam" id="PF01678">
    <property type="entry name" value="DAP_epimerase"/>
    <property type="match status" value="2"/>
</dbReference>
<dbReference type="SUPFAM" id="SSF54506">
    <property type="entry name" value="Diaminopimelate epimerase-like"/>
    <property type="match status" value="2"/>
</dbReference>
<dbReference type="PROSITE" id="PS01326">
    <property type="entry name" value="DAP_EPIMERASE"/>
    <property type="match status" value="1"/>
</dbReference>
<name>DAPF_TRIEI</name>
<gene>
    <name evidence="1" type="primary">dapF</name>
    <name type="ordered locus">Tery_1173</name>
</gene>
<feature type="chain" id="PRO_1000011978" description="Diaminopimelate epimerase">
    <location>
        <begin position="1"/>
        <end position="278"/>
    </location>
</feature>
<feature type="active site" description="Proton donor" evidence="1">
    <location>
        <position position="75"/>
    </location>
</feature>
<feature type="active site" description="Proton acceptor" evidence="1">
    <location>
        <position position="222"/>
    </location>
</feature>
<feature type="binding site" evidence="1">
    <location>
        <position position="13"/>
    </location>
    <ligand>
        <name>substrate</name>
    </ligand>
</feature>
<feature type="binding site" evidence="1">
    <location>
        <position position="66"/>
    </location>
    <ligand>
        <name>substrate</name>
    </ligand>
</feature>
<feature type="binding site" evidence="1">
    <location>
        <begin position="76"/>
        <end position="77"/>
    </location>
    <ligand>
        <name>substrate</name>
    </ligand>
</feature>
<feature type="binding site" evidence="1">
    <location>
        <position position="162"/>
    </location>
    <ligand>
        <name>substrate</name>
    </ligand>
</feature>
<feature type="binding site" evidence="1">
    <location>
        <position position="195"/>
    </location>
    <ligand>
        <name>substrate</name>
    </ligand>
</feature>
<feature type="binding site" evidence="1">
    <location>
        <begin position="213"/>
        <end position="214"/>
    </location>
    <ligand>
        <name>substrate</name>
    </ligand>
</feature>
<feature type="binding site" evidence="1">
    <location>
        <begin position="223"/>
        <end position="224"/>
    </location>
    <ligand>
        <name>substrate</name>
    </ligand>
</feature>
<feature type="site" description="Could be important to modulate the pK values of the two catalytic cysteine residues" evidence="1">
    <location>
        <position position="164"/>
    </location>
</feature>
<feature type="site" description="Could be important to modulate the pK values of the two catalytic cysteine residues" evidence="1">
    <location>
        <position position="213"/>
    </location>
</feature>
<reference key="1">
    <citation type="journal article" date="2015" name="Proc. Natl. Acad. Sci. U.S.A.">
        <title>Trichodesmium genome maintains abundant, widespread noncoding DNA in situ, despite oligotrophic lifestyle.</title>
        <authorList>
            <person name="Walworth N."/>
            <person name="Pfreundt U."/>
            <person name="Nelson W.C."/>
            <person name="Mincer T."/>
            <person name="Heidelberg J.F."/>
            <person name="Fu F."/>
            <person name="Waterbury J.B."/>
            <person name="Glavina del Rio T."/>
            <person name="Goodwin L."/>
            <person name="Kyrpides N.C."/>
            <person name="Land M.L."/>
            <person name="Woyke T."/>
            <person name="Hutchins D.A."/>
            <person name="Hess W.R."/>
            <person name="Webb E.A."/>
        </authorList>
    </citation>
    <scope>NUCLEOTIDE SEQUENCE [LARGE SCALE GENOMIC DNA]</scope>
    <source>
        <strain>IMS101</strain>
    </source>
</reference>
<proteinExistence type="inferred from homology"/>
<sequence>MTKSFTKYHGLGNDFILIDNRHQLQPILTPEQAIELCDRNFGIGADGVIFALPGVKQTDYTMRIFNSDGSEPEMCGNGIRCLAKFIAELENNNKTKYNIHTGAGIIVPELQGDGQVTVDMGQPRLLASEIPTTLANADDKVVDQLLEVGGKSWFVTCVSMGNPHCITFVEDVTAIDLAKIGPKFEHNPVFPERTNTEFIQVISPKYVKMRVWERGAGATLACGTGACASVVAGVLTQNNERLVTVELPGGCLEIEWSTIDQKIYMTGPAEKVFTGIIA</sequence>
<comment type="function">
    <text evidence="1">Catalyzes the stereoinversion of LL-2,6-diaminopimelate (L,L-DAP) to meso-diaminopimelate (meso-DAP), a precursor of L-lysine and an essential component of the bacterial peptidoglycan.</text>
</comment>
<comment type="catalytic activity">
    <reaction evidence="1">
        <text>(2S,6S)-2,6-diaminopimelate = meso-2,6-diaminopimelate</text>
        <dbReference type="Rhea" id="RHEA:15393"/>
        <dbReference type="ChEBI" id="CHEBI:57609"/>
        <dbReference type="ChEBI" id="CHEBI:57791"/>
        <dbReference type="EC" id="5.1.1.7"/>
    </reaction>
</comment>
<comment type="pathway">
    <text evidence="1">Amino-acid biosynthesis; L-lysine biosynthesis via DAP pathway; DL-2,6-diaminopimelate from LL-2,6-diaminopimelate: step 1/1.</text>
</comment>
<comment type="subunit">
    <text evidence="1">Homodimer.</text>
</comment>
<comment type="subcellular location">
    <subcellularLocation>
        <location evidence="1">Cytoplasm</location>
    </subcellularLocation>
</comment>
<comment type="similarity">
    <text evidence="1">Belongs to the diaminopimelate epimerase family.</text>
</comment>
<organism>
    <name type="scientific">Trichodesmium erythraeum (strain IMS101)</name>
    <dbReference type="NCBI Taxonomy" id="203124"/>
    <lineage>
        <taxon>Bacteria</taxon>
        <taxon>Bacillati</taxon>
        <taxon>Cyanobacteriota</taxon>
        <taxon>Cyanophyceae</taxon>
        <taxon>Oscillatoriophycideae</taxon>
        <taxon>Oscillatoriales</taxon>
        <taxon>Microcoleaceae</taxon>
        <taxon>Trichodesmium</taxon>
    </lineage>
</organism>
<protein>
    <recommendedName>
        <fullName evidence="1">Diaminopimelate epimerase</fullName>
        <shortName evidence="1">DAP epimerase</shortName>
        <ecNumber evidence="1">5.1.1.7</ecNumber>
    </recommendedName>
    <alternativeName>
        <fullName evidence="1">PLP-independent amino acid racemase</fullName>
    </alternativeName>
</protein>